<gene>
    <name evidence="1" type="primary">purH</name>
    <name type="ordered locus">PMN2A_1632</name>
</gene>
<name>PUR9_PROMT</name>
<proteinExistence type="inferred from homology"/>
<sequence>MSPIALLSVSDKTGLIPLAKALVNDLGFKIISSGGTAKLIESENLPVTRVADYTGFPEILGGRVKTLNPKIHGGILARRDKQSHLDDLDKQNINPIDLVVVNLYPFVKTISKENVSWEEAIENIDIGGPTMIRAAAKNHQDVLVVTDPSQYSNLIDAYKSKKITTELRKKYSQQAFEHTATYDLTISNWIANQSSSKKVSWLQSLPLKQELRYGENPHQKASWYGEPEKGWSGANQLQGKELSTNNLLDLEAALSTLREFGYKNNISNPSYQKAAVVIKHTNPCGVAIGDSPSSALKRALDGDRVSAFGGIIAINCPVDEAAAKEIENIFIECVVAPYFDETAKEILSKKKNLRLLELKAESVQKADKNHIRSILGGLLIQDLDEPSIDQKKWKSVTELIPTDEEMNDLSFAWKIVKHIRSNAIAVASNQQSLGIGAGQMNRVGSAKLALEAAGTKSKGAVLASDGFFPFDDTVKMASDYGISSIIQPGGSIRDEDSIKACNELGIKMILTGKRHFLH</sequence>
<reference key="1">
    <citation type="journal article" date="2007" name="PLoS Genet.">
        <title>Patterns and implications of gene gain and loss in the evolution of Prochlorococcus.</title>
        <authorList>
            <person name="Kettler G.C."/>
            <person name="Martiny A.C."/>
            <person name="Huang K."/>
            <person name="Zucker J."/>
            <person name="Coleman M.L."/>
            <person name="Rodrigue S."/>
            <person name="Chen F."/>
            <person name="Lapidus A."/>
            <person name="Ferriera S."/>
            <person name="Johnson J."/>
            <person name="Steglich C."/>
            <person name="Church G.M."/>
            <person name="Richardson P."/>
            <person name="Chisholm S.W."/>
        </authorList>
    </citation>
    <scope>NUCLEOTIDE SEQUENCE [LARGE SCALE GENOMIC DNA]</scope>
    <source>
        <strain>NATL2A</strain>
    </source>
</reference>
<protein>
    <recommendedName>
        <fullName evidence="1">Bifunctional purine biosynthesis protein PurH</fullName>
    </recommendedName>
    <domain>
        <recommendedName>
            <fullName evidence="1">Phosphoribosylaminoimidazolecarboxamide formyltransferase</fullName>
            <ecNumber evidence="1">2.1.2.3</ecNumber>
        </recommendedName>
        <alternativeName>
            <fullName evidence="1">AICAR transformylase</fullName>
        </alternativeName>
    </domain>
    <domain>
        <recommendedName>
            <fullName evidence="1">IMP cyclohydrolase</fullName>
            <ecNumber evidence="1">3.5.4.10</ecNumber>
        </recommendedName>
        <alternativeName>
            <fullName evidence="1">ATIC</fullName>
        </alternativeName>
        <alternativeName>
            <fullName evidence="1">IMP synthase</fullName>
        </alternativeName>
        <alternativeName>
            <fullName evidence="1">Inosinicase</fullName>
        </alternativeName>
    </domain>
</protein>
<comment type="catalytic activity">
    <reaction evidence="1">
        <text>(6R)-10-formyltetrahydrofolate + 5-amino-1-(5-phospho-beta-D-ribosyl)imidazole-4-carboxamide = 5-formamido-1-(5-phospho-D-ribosyl)imidazole-4-carboxamide + (6S)-5,6,7,8-tetrahydrofolate</text>
        <dbReference type="Rhea" id="RHEA:22192"/>
        <dbReference type="ChEBI" id="CHEBI:57453"/>
        <dbReference type="ChEBI" id="CHEBI:58467"/>
        <dbReference type="ChEBI" id="CHEBI:58475"/>
        <dbReference type="ChEBI" id="CHEBI:195366"/>
        <dbReference type="EC" id="2.1.2.3"/>
    </reaction>
</comment>
<comment type="catalytic activity">
    <reaction evidence="1">
        <text>IMP + H2O = 5-formamido-1-(5-phospho-D-ribosyl)imidazole-4-carboxamide</text>
        <dbReference type="Rhea" id="RHEA:18445"/>
        <dbReference type="ChEBI" id="CHEBI:15377"/>
        <dbReference type="ChEBI" id="CHEBI:58053"/>
        <dbReference type="ChEBI" id="CHEBI:58467"/>
        <dbReference type="EC" id="3.5.4.10"/>
    </reaction>
</comment>
<comment type="pathway">
    <text evidence="1">Purine metabolism; IMP biosynthesis via de novo pathway; 5-formamido-1-(5-phospho-D-ribosyl)imidazole-4-carboxamide from 5-amino-1-(5-phospho-D-ribosyl)imidazole-4-carboxamide (10-formyl THF route): step 1/1.</text>
</comment>
<comment type="pathway">
    <text evidence="1">Purine metabolism; IMP biosynthesis via de novo pathway; IMP from 5-formamido-1-(5-phospho-D-ribosyl)imidazole-4-carboxamide: step 1/1.</text>
</comment>
<comment type="domain">
    <text evidence="1">The IMP cyclohydrolase activity resides in the N-terminal region.</text>
</comment>
<comment type="similarity">
    <text evidence="1">Belongs to the PurH family.</text>
</comment>
<keyword id="KW-0378">Hydrolase</keyword>
<keyword id="KW-0511">Multifunctional enzyme</keyword>
<keyword id="KW-0658">Purine biosynthesis</keyword>
<keyword id="KW-1185">Reference proteome</keyword>
<keyword id="KW-0808">Transferase</keyword>
<dbReference type="EC" id="2.1.2.3" evidence="1"/>
<dbReference type="EC" id="3.5.4.10" evidence="1"/>
<dbReference type="EMBL" id="CP000095">
    <property type="protein sequence ID" value="AAZ59120.1"/>
    <property type="molecule type" value="Genomic_DNA"/>
</dbReference>
<dbReference type="RefSeq" id="WP_011294265.1">
    <property type="nucleotide sequence ID" value="NC_007335.2"/>
</dbReference>
<dbReference type="SMR" id="Q46HA8"/>
<dbReference type="STRING" id="59920.PMN2A_1632"/>
<dbReference type="KEGG" id="pmn:PMN2A_1632"/>
<dbReference type="HOGENOM" id="CLU_016316_5_2_3"/>
<dbReference type="OrthoDB" id="9802065at2"/>
<dbReference type="PhylomeDB" id="Q46HA8"/>
<dbReference type="UniPathway" id="UPA00074">
    <property type="reaction ID" value="UER00133"/>
</dbReference>
<dbReference type="UniPathway" id="UPA00074">
    <property type="reaction ID" value="UER00135"/>
</dbReference>
<dbReference type="Proteomes" id="UP000002535">
    <property type="component" value="Chromosome"/>
</dbReference>
<dbReference type="GO" id="GO:0005829">
    <property type="term" value="C:cytosol"/>
    <property type="evidence" value="ECO:0007669"/>
    <property type="project" value="TreeGrafter"/>
</dbReference>
<dbReference type="GO" id="GO:0003937">
    <property type="term" value="F:IMP cyclohydrolase activity"/>
    <property type="evidence" value="ECO:0007669"/>
    <property type="project" value="UniProtKB-UniRule"/>
</dbReference>
<dbReference type="GO" id="GO:0004643">
    <property type="term" value="F:phosphoribosylaminoimidazolecarboxamide formyltransferase activity"/>
    <property type="evidence" value="ECO:0007669"/>
    <property type="project" value="UniProtKB-UniRule"/>
</dbReference>
<dbReference type="GO" id="GO:0006189">
    <property type="term" value="P:'de novo' IMP biosynthetic process"/>
    <property type="evidence" value="ECO:0007669"/>
    <property type="project" value="UniProtKB-UniRule"/>
</dbReference>
<dbReference type="CDD" id="cd01421">
    <property type="entry name" value="IMPCH"/>
    <property type="match status" value="1"/>
</dbReference>
<dbReference type="FunFam" id="3.40.140.20:FF:000001">
    <property type="entry name" value="Bifunctional purine biosynthesis protein PurH"/>
    <property type="match status" value="1"/>
</dbReference>
<dbReference type="FunFam" id="3.40.50.1380:FF:000001">
    <property type="entry name" value="Bifunctional purine biosynthesis protein PurH"/>
    <property type="match status" value="1"/>
</dbReference>
<dbReference type="Gene3D" id="3.40.140.20">
    <property type="match status" value="2"/>
</dbReference>
<dbReference type="Gene3D" id="3.40.50.1380">
    <property type="entry name" value="Methylglyoxal synthase-like domain"/>
    <property type="match status" value="1"/>
</dbReference>
<dbReference type="HAMAP" id="MF_00139">
    <property type="entry name" value="PurH"/>
    <property type="match status" value="1"/>
</dbReference>
<dbReference type="InterPro" id="IPR024051">
    <property type="entry name" value="AICAR_Tfase_dup_dom_sf"/>
</dbReference>
<dbReference type="InterPro" id="IPR016193">
    <property type="entry name" value="Cytidine_deaminase-like"/>
</dbReference>
<dbReference type="InterPro" id="IPR011607">
    <property type="entry name" value="MGS-like_dom"/>
</dbReference>
<dbReference type="InterPro" id="IPR036914">
    <property type="entry name" value="MGS-like_dom_sf"/>
</dbReference>
<dbReference type="InterPro" id="IPR002695">
    <property type="entry name" value="PurH-like"/>
</dbReference>
<dbReference type="NCBIfam" id="NF002049">
    <property type="entry name" value="PRK00881.1"/>
    <property type="match status" value="1"/>
</dbReference>
<dbReference type="NCBIfam" id="TIGR00355">
    <property type="entry name" value="purH"/>
    <property type="match status" value="1"/>
</dbReference>
<dbReference type="PANTHER" id="PTHR11692:SF0">
    <property type="entry name" value="BIFUNCTIONAL PURINE BIOSYNTHESIS PROTEIN ATIC"/>
    <property type="match status" value="1"/>
</dbReference>
<dbReference type="PANTHER" id="PTHR11692">
    <property type="entry name" value="BIFUNCTIONAL PURINE BIOSYNTHESIS PROTEIN PURH"/>
    <property type="match status" value="1"/>
</dbReference>
<dbReference type="Pfam" id="PF01808">
    <property type="entry name" value="AICARFT_IMPCHas"/>
    <property type="match status" value="1"/>
</dbReference>
<dbReference type="Pfam" id="PF02142">
    <property type="entry name" value="MGS"/>
    <property type="match status" value="1"/>
</dbReference>
<dbReference type="PIRSF" id="PIRSF000414">
    <property type="entry name" value="AICARFT_IMPCHas"/>
    <property type="match status" value="1"/>
</dbReference>
<dbReference type="SMART" id="SM00798">
    <property type="entry name" value="AICARFT_IMPCHas"/>
    <property type="match status" value="1"/>
</dbReference>
<dbReference type="SMART" id="SM00851">
    <property type="entry name" value="MGS"/>
    <property type="match status" value="1"/>
</dbReference>
<dbReference type="SUPFAM" id="SSF53927">
    <property type="entry name" value="Cytidine deaminase-like"/>
    <property type="match status" value="1"/>
</dbReference>
<dbReference type="SUPFAM" id="SSF52335">
    <property type="entry name" value="Methylglyoxal synthase-like"/>
    <property type="match status" value="1"/>
</dbReference>
<dbReference type="PROSITE" id="PS51855">
    <property type="entry name" value="MGS"/>
    <property type="match status" value="1"/>
</dbReference>
<accession>Q46HA8</accession>
<evidence type="ECO:0000255" key="1">
    <source>
        <dbReference type="HAMAP-Rule" id="MF_00139"/>
    </source>
</evidence>
<evidence type="ECO:0000255" key="2">
    <source>
        <dbReference type="PROSITE-ProRule" id="PRU01202"/>
    </source>
</evidence>
<feature type="chain" id="PRO_1000018934" description="Bifunctional purine biosynthesis protein PurH">
    <location>
        <begin position="1"/>
        <end position="518"/>
    </location>
</feature>
<feature type="domain" description="MGS-like" evidence="2">
    <location>
        <begin position="1"/>
        <end position="146"/>
    </location>
</feature>
<organism>
    <name type="scientific">Prochlorococcus marinus (strain NATL2A)</name>
    <dbReference type="NCBI Taxonomy" id="59920"/>
    <lineage>
        <taxon>Bacteria</taxon>
        <taxon>Bacillati</taxon>
        <taxon>Cyanobacteriota</taxon>
        <taxon>Cyanophyceae</taxon>
        <taxon>Synechococcales</taxon>
        <taxon>Prochlorococcaceae</taxon>
        <taxon>Prochlorococcus</taxon>
    </lineage>
</organism>